<accession>P0AAK7</accession>
<accession>P32708</accession>
<accession>Q2M6N2</accession>
<reference key="1">
    <citation type="journal article" date="1994" name="Mol. Microbiol.">
        <title>A seven-gene operon essential for formate-dependent nitrite reduction to ammonia by enteric bacteria.</title>
        <authorList>
            <person name="Hussain H.A."/>
            <person name="Grove J."/>
            <person name="Griffiths L."/>
            <person name="Busby S."/>
            <person name="Cole J."/>
        </authorList>
    </citation>
    <scope>NUCLEOTIDE SEQUENCE [GENOMIC DNA]</scope>
</reference>
<reference key="2">
    <citation type="journal article" date="1993" name="Nucleic Acids Res.">
        <title>Analysis of the Escherichia coli genome. IV. DNA sequence of the region from 89.2 to 92.8 minutes.</title>
        <authorList>
            <person name="Blattner F.R."/>
            <person name="Burland V.D."/>
            <person name="Plunkett G. III"/>
            <person name="Sofia H.J."/>
            <person name="Daniels D.L."/>
        </authorList>
    </citation>
    <scope>NUCLEOTIDE SEQUENCE [LARGE SCALE GENOMIC DNA]</scope>
    <source>
        <strain>K12 / MG1655 / ATCC 47076</strain>
    </source>
</reference>
<reference key="3">
    <citation type="journal article" date="1997" name="Science">
        <title>The complete genome sequence of Escherichia coli K-12.</title>
        <authorList>
            <person name="Blattner F.R."/>
            <person name="Plunkett G. III"/>
            <person name="Bloch C.A."/>
            <person name="Perna N.T."/>
            <person name="Burland V."/>
            <person name="Riley M."/>
            <person name="Collado-Vides J."/>
            <person name="Glasner J.D."/>
            <person name="Rode C.K."/>
            <person name="Mayhew G.F."/>
            <person name="Gregor J."/>
            <person name="Davis N.W."/>
            <person name="Kirkpatrick H.A."/>
            <person name="Goeden M.A."/>
            <person name="Rose D.J."/>
            <person name="Mau B."/>
            <person name="Shao Y."/>
        </authorList>
    </citation>
    <scope>NUCLEOTIDE SEQUENCE [LARGE SCALE GENOMIC DNA]</scope>
    <scope>SEQUENCE REVISION TO 65-66</scope>
    <source>
        <strain>K12 / MG1655 / ATCC 47076</strain>
    </source>
</reference>
<reference key="4">
    <citation type="journal article" date="2006" name="Mol. Syst. Biol.">
        <title>Highly accurate genome sequences of Escherichia coli K-12 strains MG1655 and W3110.</title>
        <authorList>
            <person name="Hayashi K."/>
            <person name="Morooka N."/>
            <person name="Yamamoto Y."/>
            <person name="Fujita K."/>
            <person name="Isono K."/>
            <person name="Choi S."/>
            <person name="Ohtsubo E."/>
            <person name="Baba T."/>
            <person name="Wanner B.L."/>
            <person name="Mori H."/>
            <person name="Horiuchi T."/>
        </authorList>
    </citation>
    <scope>NUCLEOTIDE SEQUENCE [LARGE SCALE GENOMIC DNA]</scope>
    <source>
        <strain>K12 / W3110 / ATCC 27325 / DSM 5911</strain>
    </source>
</reference>
<reference key="5">
    <citation type="journal article" date="2007" name="J. Biol. Chem.">
        <title>Export pathway selectivity of Escherichia coli twin arginine translocation signal peptides.</title>
        <authorList>
            <person name="Tullman-Ercek D."/>
            <person name="DeLisa M.P."/>
            <person name="Kawarasaki Y."/>
            <person name="Iranpour P."/>
            <person name="Ribnicky B."/>
            <person name="Palmer T."/>
            <person name="Georgiou G."/>
        </authorList>
    </citation>
    <scope>EXPORT VIA THE TAT-SYSTEM</scope>
</reference>
<evidence type="ECO:0000250" key="1"/>
<evidence type="ECO:0000255" key="2">
    <source>
        <dbReference type="PROSITE-ProRule" id="PRU00648"/>
    </source>
</evidence>
<evidence type="ECO:0000255" key="3">
    <source>
        <dbReference type="PROSITE-ProRule" id="PRU00711"/>
    </source>
</evidence>
<evidence type="ECO:0000305" key="4"/>
<name>NRFC_ECOLI</name>
<feature type="signal peptide" description="Tat-type signal" evidence="2">
    <location>
        <begin position="1"/>
        <end position="27"/>
    </location>
</feature>
<feature type="chain" id="PRO_0000042276" description="Protein NrfC">
    <location>
        <begin position="28"/>
        <end position="223"/>
    </location>
</feature>
<feature type="domain" description="4Fe-4S ferredoxin-type 1" evidence="3">
    <location>
        <begin position="37"/>
        <end position="65"/>
    </location>
</feature>
<feature type="domain" description="4Fe-4S ferredoxin-type 2" evidence="3">
    <location>
        <begin position="83"/>
        <end position="114"/>
    </location>
</feature>
<feature type="domain" description="4Fe-4S ferredoxin-type 3" evidence="3">
    <location>
        <begin position="116"/>
        <end position="145"/>
    </location>
</feature>
<feature type="binding site" evidence="1">
    <location>
        <position position="46"/>
    </location>
    <ligand>
        <name>[4Fe-4S] cluster</name>
        <dbReference type="ChEBI" id="CHEBI:49883"/>
        <label>1</label>
    </ligand>
</feature>
<feature type="binding site" evidence="1">
    <location>
        <position position="49"/>
    </location>
    <ligand>
        <name>[4Fe-4S] cluster</name>
        <dbReference type="ChEBI" id="CHEBI:49883"/>
        <label>1</label>
    </ligand>
</feature>
<feature type="binding site" evidence="1">
    <location>
        <position position="52"/>
    </location>
    <ligand>
        <name>[4Fe-4S] cluster</name>
        <dbReference type="ChEBI" id="CHEBI:49883"/>
        <label>1</label>
    </ligand>
</feature>
<feature type="binding site" evidence="1">
    <location>
        <position position="56"/>
    </location>
    <ligand>
        <name>[4Fe-4S] cluster</name>
        <dbReference type="ChEBI" id="CHEBI:49883"/>
        <label>2</label>
    </ligand>
</feature>
<feature type="binding site" evidence="1">
    <location>
        <position position="92"/>
    </location>
    <ligand>
        <name>[4Fe-4S] cluster</name>
        <dbReference type="ChEBI" id="CHEBI:49883"/>
        <label>3</label>
    </ligand>
</feature>
<feature type="binding site" evidence="1">
    <location>
        <position position="95"/>
    </location>
    <ligand>
        <name>[4Fe-4S] cluster</name>
        <dbReference type="ChEBI" id="CHEBI:49883"/>
        <label>3</label>
    </ligand>
</feature>
<feature type="binding site" evidence="1">
    <location>
        <position position="100"/>
    </location>
    <ligand>
        <name>[4Fe-4S] cluster</name>
        <dbReference type="ChEBI" id="CHEBI:49883"/>
        <label>3</label>
    </ligand>
</feature>
<feature type="binding site" evidence="1">
    <location>
        <position position="104"/>
    </location>
    <ligand>
        <name>[4Fe-4S] cluster</name>
        <dbReference type="ChEBI" id="CHEBI:49883"/>
        <label>4</label>
    </ligand>
</feature>
<feature type="binding site" evidence="1">
    <location>
        <position position="125"/>
    </location>
    <ligand>
        <name>[4Fe-4S] cluster</name>
        <dbReference type="ChEBI" id="CHEBI:49883"/>
        <label>4</label>
    </ligand>
</feature>
<feature type="binding site" evidence="1">
    <location>
        <position position="128"/>
    </location>
    <ligand>
        <name>[4Fe-4S] cluster</name>
        <dbReference type="ChEBI" id="CHEBI:49883"/>
        <label>4</label>
    </ligand>
</feature>
<feature type="binding site" evidence="1">
    <location>
        <position position="131"/>
    </location>
    <ligand>
        <name>[4Fe-4S] cluster</name>
        <dbReference type="ChEBI" id="CHEBI:49883"/>
        <label>4</label>
    </ligand>
</feature>
<feature type="binding site" evidence="1">
    <location>
        <position position="135"/>
    </location>
    <ligand>
        <name>[4Fe-4S] cluster</name>
        <dbReference type="ChEBI" id="CHEBI:49883"/>
        <label>3</label>
    </ligand>
</feature>
<feature type="binding site" evidence="1">
    <location>
        <position position="152"/>
    </location>
    <ligand>
        <name>[4Fe-4S] cluster</name>
        <dbReference type="ChEBI" id="CHEBI:49883"/>
        <label>2</label>
    </ligand>
</feature>
<feature type="binding site" evidence="1">
    <location>
        <position position="155"/>
    </location>
    <ligand>
        <name>[4Fe-4S] cluster</name>
        <dbReference type="ChEBI" id="CHEBI:49883"/>
        <label>2</label>
    </ligand>
</feature>
<feature type="binding site" evidence="1">
    <location>
        <position position="168"/>
    </location>
    <ligand>
        <name>[4Fe-4S] cluster</name>
        <dbReference type="ChEBI" id="CHEBI:49883"/>
        <label>2</label>
    </ligand>
</feature>
<feature type="binding site" evidence="1">
    <location>
        <position position="172"/>
    </location>
    <ligand>
        <name>[4Fe-4S] cluster</name>
        <dbReference type="ChEBI" id="CHEBI:49883"/>
        <label>1</label>
    </ligand>
</feature>
<feature type="sequence conflict" description="In Ref. 2; AAC43166." evidence="4" ref="2">
    <original>GV</original>
    <variation>AS</variation>
    <location>
        <begin position="65"/>
        <end position="66"/>
    </location>
</feature>
<protein>
    <recommendedName>
        <fullName>Protein NrfC</fullName>
    </recommendedName>
</protein>
<dbReference type="EMBL" id="X72298">
    <property type="protein sequence ID" value="CAA51043.1"/>
    <property type="molecule type" value="Genomic_DNA"/>
</dbReference>
<dbReference type="EMBL" id="U00006">
    <property type="protein sequence ID" value="AAC43166.1"/>
    <property type="molecule type" value="Genomic_DNA"/>
</dbReference>
<dbReference type="EMBL" id="U00096">
    <property type="protein sequence ID" value="AAC77042.1"/>
    <property type="molecule type" value="Genomic_DNA"/>
</dbReference>
<dbReference type="EMBL" id="AP009048">
    <property type="protein sequence ID" value="BAE78074.1"/>
    <property type="molecule type" value="Genomic_DNA"/>
</dbReference>
<dbReference type="PIR" id="C57987">
    <property type="entry name" value="C57987"/>
</dbReference>
<dbReference type="RefSeq" id="NP_418496.1">
    <property type="nucleotide sequence ID" value="NC_000913.3"/>
</dbReference>
<dbReference type="RefSeq" id="WP_000220281.1">
    <property type="nucleotide sequence ID" value="NZ_STEB01000014.1"/>
</dbReference>
<dbReference type="SMR" id="P0AAK7"/>
<dbReference type="BioGRID" id="4263519">
    <property type="interactions" value="42"/>
</dbReference>
<dbReference type="FunCoup" id="P0AAK7">
    <property type="interactions" value="70"/>
</dbReference>
<dbReference type="IntAct" id="P0AAK7">
    <property type="interactions" value="3"/>
</dbReference>
<dbReference type="STRING" id="511145.b4072"/>
<dbReference type="TCDB" id="5.A.3.5.3">
    <property type="family name" value="the prokaryotic molybdopterin-containing oxidoreductase (pmo) family"/>
</dbReference>
<dbReference type="jPOST" id="P0AAK7"/>
<dbReference type="PaxDb" id="511145-b4072"/>
<dbReference type="EnsemblBacteria" id="AAC77042">
    <property type="protein sequence ID" value="AAC77042"/>
    <property type="gene ID" value="b4072"/>
</dbReference>
<dbReference type="GeneID" id="93777757"/>
<dbReference type="GeneID" id="948581"/>
<dbReference type="KEGG" id="ecj:JW4033"/>
<dbReference type="KEGG" id="eco:b4072"/>
<dbReference type="KEGG" id="ecoc:C3026_22010"/>
<dbReference type="PATRIC" id="fig|1411691.4.peg.2632"/>
<dbReference type="EchoBASE" id="EB1889"/>
<dbReference type="eggNOG" id="COG0437">
    <property type="taxonomic scope" value="Bacteria"/>
</dbReference>
<dbReference type="HOGENOM" id="CLU_043374_1_3_6"/>
<dbReference type="InParanoid" id="P0AAK7"/>
<dbReference type="OMA" id="CVDRIYN"/>
<dbReference type="OrthoDB" id="9779457at2"/>
<dbReference type="PhylomeDB" id="P0AAK7"/>
<dbReference type="BioCyc" id="EcoCyc:NRFC-MONOMER"/>
<dbReference type="PHI-base" id="PHI:10999"/>
<dbReference type="PRO" id="PR:P0AAK7"/>
<dbReference type="Proteomes" id="UP000000625">
    <property type="component" value="Chromosome"/>
</dbReference>
<dbReference type="GO" id="GO:0051539">
    <property type="term" value="F:4 iron, 4 sulfur cluster binding"/>
    <property type="evidence" value="ECO:0007669"/>
    <property type="project" value="UniProtKB-KW"/>
</dbReference>
<dbReference type="GO" id="GO:0046872">
    <property type="term" value="F:metal ion binding"/>
    <property type="evidence" value="ECO:0007669"/>
    <property type="project" value="UniProtKB-KW"/>
</dbReference>
<dbReference type="GO" id="GO:0042279">
    <property type="term" value="F:nitrite reductase (cytochrome, ammonia-forming) activity"/>
    <property type="evidence" value="ECO:0000315"/>
    <property type="project" value="EcoCyc"/>
</dbReference>
<dbReference type="CDD" id="cd10551">
    <property type="entry name" value="PsrB"/>
    <property type="match status" value="1"/>
</dbReference>
<dbReference type="FunFam" id="3.30.70.20:FF:000014">
    <property type="entry name" value="Cytochrome c nitrite reductase, Fe-S protein"/>
    <property type="match status" value="1"/>
</dbReference>
<dbReference type="Gene3D" id="3.30.70.20">
    <property type="match status" value="2"/>
</dbReference>
<dbReference type="InterPro" id="IPR017896">
    <property type="entry name" value="4Fe4S_Fe-S-bd"/>
</dbReference>
<dbReference type="InterPro" id="IPR017900">
    <property type="entry name" value="4Fe4S_Fe_S_CS"/>
</dbReference>
<dbReference type="InterPro" id="IPR017567">
    <property type="entry name" value="Cyt_c_NO2Rdtase_NrfC"/>
</dbReference>
<dbReference type="InterPro" id="IPR050954">
    <property type="entry name" value="ET_IronSulfur_Cluster-Binding"/>
</dbReference>
<dbReference type="InterPro" id="IPR006311">
    <property type="entry name" value="TAT_signal"/>
</dbReference>
<dbReference type="InterPro" id="IPR019546">
    <property type="entry name" value="TAT_signal_bac_arc"/>
</dbReference>
<dbReference type="NCBIfam" id="TIGR03149">
    <property type="entry name" value="cyt_nit_nrfC"/>
    <property type="match status" value="1"/>
</dbReference>
<dbReference type="NCBIfam" id="TIGR01409">
    <property type="entry name" value="TAT_signal_seq"/>
    <property type="match status" value="1"/>
</dbReference>
<dbReference type="PANTHER" id="PTHR43177">
    <property type="entry name" value="PROTEIN NRFC"/>
    <property type="match status" value="1"/>
</dbReference>
<dbReference type="PANTHER" id="PTHR43177:SF9">
    <property type="entry name" value="PROTEIN NRFC"/>
    <property type="match status" value="1"/>
</dbReference>
<dbReference type="Pfam" id="PF00037">
    <property type="entry name" value="Fer4"/>
    <property type="match status" value="1"/>
</dbReference>
<dbReference type="Pfam" id="PF13247">
    <property type="entry name" value="Fer4_11"/>
    <property type="match status" value="1"/>
</dbReference>
<dbReference type="SUPFAM" id="SSF54862">
    <property type="entry name" value="4Fe-4S ferredoxins"/>
    <property type="match status" value="1"/>
</dbReference>
<dbReference type="PROSITE" id="PS00198">
    <property type="entry name" value="4FE4S_FER_1"/>
    <property type="match status" value="1"/>
</dbReference>
<dbReference type="PROSITE" id="PS51379">
    <property type="entry name" value="4FE4S_FER_2"/>
    <property type="match status" value="3"/>
</dbReference>
<dbReference type="PROSITE" id="PS51318">
    <property type="entry name" value="TAT"/>
    <property type="match status" value="1"/>
</dbReference>
<gene>
    <name type="primary">nrfC</name>
    <name type="synonym">yjcJ</name>
    <name type="ordered locus">b4072</name>
    <name type="ordered locus">JW4033</name>
</gene>
<keyword id="KW-0004">4Fe-4S</keyword>
<keyword id="KW-0249">Electron transport</keyword>
<keyword id="KW-0408">Iron</keyword>
<keyword id="KW-0411">Iron-sulfur</keyword>
<keyword id="KW-0479">Metal-binding</keyword>
<keyword id="KW-0560">Oxidoreductase</keyword>
<keyword id="KW-1185">Reference proteome</keyword>
<keyword id="KW-0677">Repeat</keyword>
<keyword id="KW-0732">Signal</keyword>
<keyword id="KW-0813">Transport</keyword>
<sequence length="223" mass="24567">MTWSRRQFLTGVGVLAAVSGTAGRVVAKTLNINGVRYGMVHDESLCIGCTACMDACREVNKVPEGVSRLTIIRSEPQGEFPDVKYRFFRKSCQHCDHAPCVDVCPTGASFRDAASGIVDVNPDLCVGCQYCIAACPYRVRFIHPVTKTADKCDFCRKTNLQAGKLPACVEACPTKALTFGNLDDPNSEISQLLRQKPTYRYKLALGTKPKLYRVPFKYGEVSQ</sequence>
<proteinExistence type="inferred from homology"/>
<organism>
    <name type="scientific">Escherichia coli (strain K12)</name>
    <dbReference type="NCBI Taxonomy" id="83333"/>
    <lineage>
        <taxon>Bacteria</taxon>
        <taxon>Pseudomonadati</taxon>
        <taxon>Pseudomonadota</taxon>
        <taxon>Gammaproteobacteria</taxon>
        <taxon>Enterobacterales</taxon>
        <taxon>Enterobacteriaceae</taxon>
        <taxon>Escherichia</taxon>
    </lineage>
</organism>
<comment type="function">
    <text>Probably involved in the transfer of electrons from the quinone pool to the type-c cytochromes.</text>
</comment>
<comment type="PTM">
    <text>Exported by the Tat system. The position of the signal peptide cleavage has not been experimentally proven.</text>
</comment>